<feature type="chain" id="PRO_1000122887" description="Large ribosomal subunit protein bL34">
    <location>
        <begin position="1"/>
        <end position="44"/>
    </location>
</feature>
<feature type="region of interest" description="Disordered" evidence="2">
    <location>
        <begin position="23"/>
        <end position="44"/>
    </location>
</feature>
<feature type="compositionally biased region" description="Basic residues" evidence="2">
    <location>
        <begin position="31"/>
        <end position="44"/>
    </location>
</feature>
<sequence length="44" mass="5082">MKRTFQPSVLKRARTHGFRARMATKNGRQVLARRRAKGRKSLSA</sequence>
<reference key="1">
    <citation type="submission" date="2008-06" db="EMBL/GenBank/DDBJ databases">
        <title>Genome and proteome analysis of A. pleuropneumoniae serotype 7.</title>
        <authorList>
            <person name="Linke B."/>
            <person name="Buettner F."/>
            <person name="Martinez-Arias R."/>
            <person name="Goesmann A."/>
            <person name="Baltes N."/>
            <person name="Tegetmeyer H."/>
            <person name="Singh M."/>
            <person name="Gerlach G.F."/>
        </authorList>
    </citation>
    <scope>NUCLEOTIDE SEQUENCE [LARGE SCALE GENOMIC DNA]</scope>
    <source>
        <strain>AP76</strain>
    </source>
</reference>
<dbReference type="EMBL" id="CP001091">
    <property type="protein sequence ID" value="ACE62678.1"/>
    <property type="molecule type" value="Genomic_DNA"/>
</dbReference>
<dbReference type="RefSeq" id="WP_005599701.1">
    <property type="nucleotide sequence ID" value="NC_010939.1"/>
</dbReference>
<dbReference type="SMR" id="B3H308"/>
<dbReference type="GeneID" id="92743426"/>
<dbReference type="KEGG" id="apa:APP7_2026"/>
<dbReference type="HOGENOM" id="CLU_129938_2_0_6"/>
<dbReference type="Proteomes" id="UP000001226">
    <property type="component" value="Chromosome"/>
</dbReference>
<dbReference type="GO" id="GO:1990904">
    <property type="term" value="C:ribonucleoprotein complex"/>
    <property type="evidence" value="ECO:0007669"/>
    <property type="project" value="UniProtKB-KW"/>
</dbReference>
<dbReference type="GO" id="GO:0005840">
    <property type="term" value="C:ribosome"/>
    <property type="evidence" value="ECO:0007669"/>
    <property type="project" value="UniProtKB-KW"/>
</dbReference>
<dbReference type="GO" id="GO:0003735">
    <property type="term" value="F:structural constituent of ribosome"/>
    <property type="evidence" value="ECO:0007669"/>
    <property type="project" value="InterPro"/>
</dbReference>
<dbReference type="GO" id="GO:0006412">
    <property type="term" value="P:translation"/>
    <property type="evidence" value="ECO:0007669"/>
    <property type="project" value="UniProtKB-UniRule"/>
</dbReference>
<dbReference type="FunFam" id="1.10.287.3980:FF:000001">
    <property type="entry name" value="Mitochondrial ribosomal protein L34"/>
    <property type="match status" value="1"/>
</dbReference>
<dbReference type="Gene3D" id="1.10.287.3980">
    <property type="match status" value="1"/>
</dbReference>
<dbReference type="HAMAP" id="MF_00391">
    <property type="entry name" value="Ribosomal_bL34"/>
    <property type="match status" value="1"/>
</dbReference>
<dbReference type="InterPro" id="IPR000271">
    <property type="entry name" value="Ribosomal_bL34"/>
</dbReference>
<dbReference type="InterPro" id="IPR020939">
    <property type="entry name" value="Ribosomal_bL34_CS"/>
</dbReference>
<dbReference type="NCBIfam" id="TIGR01030">
    <property type="entry name" value="rpmH_bact"/>
    <property type="match status" value="1"/>
</dbReference>
<dbReference type="PANTHER" id="PTHR14503:SF4">
    <property type="entry name" value="LARGE RIBOSOMAL SUBUNIT PROTEIN BL34M"/>
    <property type="match status" value="1"/>
</dbReference>
<dbReference type="PANTHER" id="PTHR14503">
    <property type="entry name" value="MITOCHONDRIAL RIBOSOMAL PROTEIN 34 FAMILY MEMBER"/>
    <property type="match status" value="1"/>
</dbReference>
<dbReference type="Pfam" id="PF00468">
    <property type="entry name" value="Ribosomal_L34"/>
    <property type="match status" value="1"/>
</dbReference>
<dbReference type="PROSITE" id="PS00784">
    <property type="entry name" value="RIBOSOMAL_L34"/>
    <property type="match status" value="1"/>
</dbReference>
<protein>
    <recommendedName>
        <fullName evidence="1">Large ribosomal subunit protein bL34</fullName>
    </recommendedName>
    <alternativeName>
        <fullName evidence="3">50S ribosomal protein L34</fullName>
    </alternativeName>
</protein>
<proteinExistence type="inferred from homology"/>
<keyword id="KW-0687">Ribonucleoprotein</keyword>
<keyword id="KW-0689">Ribosomal protein</keyword>
<accession>B3H308</accession>
<comment type="similarity">
    <text evidence="1">Belongs to the bacterial ribosomal protein bL34 family.</text>
</comment>
<name>RL34_ACTP7</name>
<evidence type="ECO:0000255" key="1">
    <source>
        <dbReference type="HAMAP-Rule" id="MF_00391"/>
    </source>
</evidence>
<evidence type="ECO:0000256" key="2">
    <source>
        <dbReference type="SAM" id="MobiDB-lite"/>
    </source>
</evidence>
<evidence type="ECO:0000305" key="3"/>
<organism>
    <name type="scientific">Actinobacillus pleuropneumoniae serotype 7 (strain AP76)</name>
    <dbReference type="NCBI Taxonomy" id="537457"/>
    <lineage>
        <taxon>Bacteria</taxon>
        <taxon>Pseudomonadati</taxon>
        <taxon>Pseudomonadota</taxon>
        <taxon>Gammaproteobacteria</taxon>
        <taxon>Pasteurellales</taxon>
        <taxon>Pasteurellaceae</taxon>
        <taxon>Actinobacillus</taxon>
    </lineage>
</organism>
<gene>
    <name evidence="1" type="primary">rpmH</name>
    <name type="ordered locus">APP7_2026</name>
</gene>